<reference key="1">
    <citation type="submission" date="2007-08" db="EMBL/GenBank/DDBJ databases">
        <title>Complete sequence of Thermotoga lettingae TMO.</title>
        <authorList>
            <consortium name="US DOE Joint Genome Institute"/>
            <person name="Copeland A."/>
            <person name="Lucas S."/>
            <person name="Lapidus A."/>
            <person name="Barry K."/>
            <person name="Glavina del Rio T."/>
            <person name="Dalin E."/>
            <person name="Tice H."/>
            <person name="Pitluck S."/>
            <person name="Foster B."/>
            <person name="Bruce D."/>
            <person name="Schmutz J."/>
            <person name="Larimer F."/>
            <person name="Land M."/>
            <person name="Hauser L."/>
            <person name="Kyrpides N."/>
            <person name="Mikhailova N."/>
            <person name="Nelson K."/>
            <person name="Gogarten J.P."/>
            <person name="Noll K."/>
            <person name="Richardson P."/>
        </authorList>
    </citation>
    <scope>NUCLEOTIDE SEQUENCE [LARGE SCALE GENOMIC DNA]</scope>
    <source>
        <strain>ATCC BAA-301 / DSM 14385 / NBRC 107922 / TMO</strain>
    </source>
</reference>
<keyword id="KW-0648">Protein biosynthesis</keyword>
<keyword id="KW-1185">Reference proteome</keyword>
<keyword id="KW-0808">Transferase</keyword>
<dbReference type="EC" id="2.1.2.9" evidence="1"/>
<dbReference type="EMBL" id="CP000812">
    <property type="protein sequence ID" value="ABV33259.1"/>
    <property type="molecule type" value="Genomic_DNA"/>
</dbReference>
<dbReference type="RefSeq" id="WP_012002740.1">
    <property type="nucleotide sequence ID" value="NZ_BSDV01000001.1"/>
</dbReference>
<dbReference type="SMR" id="A8F525"/>
<dbReference type="STRING" id="416591.Tlet_0693"/>
<dbReference type="KEGG" id="tle:Tlet_0693"/>
<dbReference type="eggNOG" id="COG0223">
    <property type="taxonomic scope" value="Bacteria"/>
</dbReference>
<dbReference type="HOGENOM" id="CLU_033347_1_1_0"/>
<dbReference type="OrthoDB" id="9802815at2"/>
<dbReference type="Proteomes" id="UP000002016">
    <property type="component" value="Chromosome"/>
</dbReference>
<dbReference type="GO" id="GO:0005829">
    <property type="term" value="C:cytosol"/>
    <property type="evidence" value="ECO:0007669"/>
    <property type="project" value="TreeGrafter"/>
</dbReference>
<dbReference type="GO" id="GO:0004479">
    <property type="term" value="F:methionyl-tRNA formyltransferase activity"/>
    <property type="evidence" value="ECO:0007669"/>
    <property type="project" value="UniProtKB-UniRule"/>
</dbReference>
<dbReference type="CDD" id="cd08646">
    <property type="entry name" value="FMT_core_Met-tRNA-FMT_N"/>
    <property type="match status" value="1"/>
</dbReference>
<dbReference type="CDD" id="cd08704">
    <property type="entry name" value="Met_tRNA_FMT_C"/>
    <property type="match status" value="1"/>
</dbReference>
<dbReference type="Gene3D" id="3.40.50.12230">
    <property type="match status" value="1"/>
</dbReference>
<dbReference type="HAMAP" id="MF_00182">
    <property type="entry name" value="Formyl_trans"/>
    <property type="match status" value="1"/>
</dbReference>
<dbReference type="InterPro" id="IPR005794">
    <property type="entry name" value="Fmt"/>
</dbReference>
<dbReference type="InterPro" id="IPR005793">
    <property type="entry name" value="Formyl_trans_C"/>
</dbReference>
<dbReference type="InterPro" id="IPR002376">
    <property type="entry name" value="Formyl_transf_N"/>
</dbReference>
<dbReference type="InterPro" id="IPR036477">
    <property type="entry name" value="Formyl_transf_N_sf"/>
</dbReference>
<dbReference type="InterPro" id="IPR011034">
    <property type="entry name" value="Formyl_transferase-like_C_sf"/>
</dbReference>
<dbReference type="InterPro" id="IPR044135">
    <property type="entry name" value="Met-tRNA-FMT_C"/>
</dbReference>
<dbReference type="InterPro" id="IPR041711">
    <property type="entry name" value="Met-tRNA-FMT_N"/>
</dbReference>
<dbReference type="NCBIfam" id="TIGR00460">
    <property type="entry name" value="fmt"/>
    <property type="match status" value="1"/>
</dbReference>
<dbReference type="PANTHER" id="PTHR11138">
    <property type="entry name" value="METHIONYL-TRNA FORMYLTRANSFERASE"/>
    <property type="match status" value="1"/>
</dbReference>
<dbReference type="PANTHER" id="PTHR11138:SF5">
    <property type="entry name" value="METHIONYL-TRNA FORMYLTRANSFERASE, MITOCHONDRIAL"/>
    <property type="match status" value="1"/>
</dbReference>
<dbReference type="Pfam" id="PF02911">
    <property type="entry name" value="Formyl_trans_C"/>
    <property type="match status" value="1"/>
</dbReference>
<dbReference type="Pfam" id="PF00551">
    <property type="entry name" value="Formyl_trans_N"/>
    <property type="match status" value="1"/>
</dbReference>
<dbReference type="SUPFAM" id="SSF50486">
    <property type="entry name" value="FMT C-terminal domain-like"/>
    <property type="match status" value="1"/>
</dbReference>
<dbReference type="SUPFAM" id="SSF53328">
    <property type="entry name" value="Formyltransferase"/>
    <property type="match status" value="1"/>
</dbReference>
<organism>
    <name type="scientific">Pseudothermotoga lettingae (strain ATCC BAA-301 / DSM 14385 / NBRC 107922 / TMO)</name>
    <name type="common">Thermotoga lettingae</name>
    <dbReference type="NCBI Taxonomy" id="416591"/>
    <lineage>
        <taxon>Bacteria</taxon>
        <taxon>Thermotogati</taxon>
        <taxon>Thermotogota</taxon>
        <taxon>Thermotogae</taxon>
        <taxon>Thermotogales</taxon>
        <taxon>Thermotogaceae</taxon>
        <taxon>Pseudothermotoga</taxon>
    </lineage>
</organism>
<name>FMT_PSELT</name>
<feature type="chain" id="PRO_1000058409" description="Methionyl-tRNA formyltransferase">
    <location>
        <begin position="1"/>
        <end position="302"/>
    </location>
</feature>
<feature type="binding site" evidence="1">
    <location>
        <begin position="103"/>
        <end position="106"/>
    </location>
    <ligand>
        <name>(6S)-5,6,7,8-tetrahydrofolate</name>
        <dbReference type="ChEBI" id="CHEBI:57453"/>
    </ligand>
</feature>
<evidence type="ECO:0000255" key="1">
    <source>
        <dbReference type="HAMAP-Rule" id="MF_00182"/>
    </source>
</evidence>
<protein>
    <recommendedName>
        <fullName evidence="1">Methionyl-tRNA formyltransferase</fullName>
        <ecNumber evidence="1">2.1.2.9</ecNumber>
    </recommendedName>
</protein>
<comment type="function">
    <text evidence="1">Attaches a formyl group to the free amino group of methionyl-tRNA(fMet). The formyl group appears to play a dual role in the initiator identity of N-formylmethionyl-tRNA by promoting its recognition by IF2 and preventing the misappropriation of this tRNA by the elongation apparatus.</text>
</comment>
<comment type="catalytic activity">
    <reaction evidence="1">
        <text>L-methionyl-tRNA(fMet) + (6R)-10-formyltetrahydrofolate = N-formyl-L-methionyl-tRNA(fMet) + (6S)-5,6,7,8-tetrahydrofolate + H(+)</text>
        <dbReference type="Rhea" id="RHEA:24380"/>
        <dbReference type="Rhea" id="RHEA-COMP:9952"/>
        <dbReference type="Rhea" id="RHEA-COMP:9953"/>
        <dbReference type="ChEBI" id="CHEBI:15378"/>
        <dbReference type="ChEBI" id="CHEBI:57453"/>
        <dbReference type="ChEBI" id="CHEBI:78530"/>
        <dbReference type="ChEBI" id="CHEBI:78844"/>
        <dbReference type="ChEBI" id="CHEBI:195366"/>
        <dbReference type="EC" id="2.1.2.9"/>
    </reaction>
</comment>
<comment type="similarity">
    <text evidence="1">Belongs to the Fmt family.</text>
</comment>
<sequence>MKILFLGTPLYASRHLEALLSAGHMVIGVITQPDKPAGRGLRMVHSPVKDLALKNKIPVFESLKDFPFDRLTPDIGIVVAYGGLIKKKFLDLIPFGYYNIHPSLLPKYRGAAPINRALENGEKMTGVSLFKLTEKLDAGPIVLQVEISVDCFETFDSLENRMIEAGKKILCDFLKNPESFELREQDHSQASYAPKITPADLFVDFRKDSEAVKNKIRAYDSRPGARTFFHGEQVKLFGAVAIEKCHSGEPGTIVHIDDKGAYVTTSDGIIVISQIQFPSKKKMSFLSALNGRMLRVKDRFQS</sequence>
<gene>
    <name evidence="1" type="primary">fmt</name>
    <name type="ordered locus">Tlet_0693</name>
</gene>
<proteinExistence type="inferred from homology"/>
<accession>A8F525</accession>